<protein>
    <recommendedName>
        <fullName evidence="1">Fumarate hydratase class II</fullName>
        <shortName evidence="1">Fumarase C</shortName>
        <ecNumber evidence="1">4.2.1.2</ecNumber>
    </recommendedName>
    <alternativeName>
        <fullName evidence="1">Aerobic fumarase</fullName>
    </alternativeName>
    <alternativeName>
        <fullName evidence="1">Iron-independent fumarase</fullName>
    </alternativeName>
</protein>
<proteinExistence type="inferred from homology"/>
<evidence type="ECO:0000255" key="1">
    <source>
        <dbReference type="HAMAP-Rule" id="MF_00743"/>
    </source>
</evidence>
<evidence type="ECO:0000305" key="2"/>
<feature type="chain" id="PRO_0000161327" description="Fumarate hydratase class II">
    <location>
        <begin position="1"/>
        <end position="466"/>
    </location>
</feature>
<feature type="active site" description="Proton donor/acceptor" evidence="1">
    <location>
        <position position="188"/>
    </location>
</feature>
<feature type="active site" evidence="1">
    <location>
        <position position="318"/>
    </location>
</feature>
<feature type="binding site" evidence="1">
    <location>
        <begin position="99"/>
        <end position="101"/>
    </location>
    <ligand>
        <name>substrate</name>
    </ligand>
</feature>
<feature type="binding site" description="in site B" evidence="1">
    <location>
        <begin position="129"/>
        <end position="132"/>
    </location>
    <ligand>
        <name>substrate</name>
    </ligand>
</feature>
<feature type="binding site" evidence="1">
    <location>
        <begin position="139"/>
        <end position="141"/>
    </location>
    <ligand>
        <name>substrate</name>
    </ligand>
</feature>
<feature type="binding site" evidence="1">
    <location>
        <position position="187"/>
    </location>
    <ligand>
        <name>substrate</name>
    </ligand>
</feature>
<feature type="binding site" evidence="1">
    <location>
        <position position="319"/>
    </location>
    <ligand>
        <name>substrate</name>
    </ligand>
</feature>
<feature type="binding site" evidence="1">
    <location>
        <begin position="324"/>
        <end position="326"/>
    </location>
    <ligand>
        <name>substrate</name>
    </ligand>
</feature>
<feature type="site" description="Important for catalytic activity" evidence="1">
    <location>
        <position position="331"/>
    </location>
</feature>
<feature type="sequence conflict" description="In Ref. 1; BAA25700." evidence="2" ref="1">
    <original>I</original>
    <variation>F</variation>
    <location>
        <position position="34"/>
    </location>
</feature>
<feature type="sequence conflict" description="In Ref. 1; BAA25700." evidence="2" ref="1">
    <original>A</original>
    <variation>G</variation>
    <location>
        <position position="238"/>
    </location>
</feature>
<accession>O66271</accession>
<reference key="1">
    <citation type="submission" date="1998-02" db="EMBL/GenBank/DDBJ databases">
        <title>Molecular cloning and sequence analysis of the fumC and sodA genes from an extremely thermophilic eubacterium Thermus thermophilus.</title>
        <authorList>
            <person name="Kosuge T."/>
            <person name="Umehara K."/>
            <person name="Matsuura S."/>
            <person name="Hoshino T."/>
        </authorList>
    </citation>
    <scope>NUCLEOTIDE SEQUENCE [GENOMIC DNA]</scope>
</reference>
<reference key="2">
    <citation type="journal article" date="2004" name="Nat. Biotechnol.">
        <title>The genome sequence of the extreme thermophile Thermus thermophilus.</title>
        <authorList>
            <person name="Henne A."/>
            <person name="Brueggemann H."/>
            <person name="Raasch C."/>
            <person name="Wiezer A."/>
            <person name="Hartsch T."/>
            <person name="Liesegang H."/>
            <person name="Johann A."/>
            <person name="Lienard T."/>
            <person name="Gohl O."/>
            <person name="Martinez-Arias R."/>
            <person name="Jacobi C."/>
            <person name="Starkuviene V."/>
            <person name="Schlenczeck S."/>
            <person name="Dencker S."/>
            <person name="Huber R."/>
            <person name="Klenk H.-P."/>
            <person name="Kramer W."/>
            <person name="Merkl R."/>
            <person name="Gottschalk G."/>
            <person name="Fritz H.-J."/>
        </authorList>
    </citation>
    <scope>NUCLEOTIDE SEQUENCE [LARGE SCALE GENOMIC DNA]</scope>
    <source>
        <strain>ATCC BAA-163 / DSM 7039 / HB27</strain>
    </source>
</reference>
<sequence length="466" mass="50882">MEYRIERDTMGEVRVPADKYWGAQTQRSLENFRIGTDRFRMPLEIIRAYGMLKKAAARANLELGELPEEIAKAIIQAAEEVVQGKWDDHFPLVVFQTGSGTQTNMNVNEVIANRASEILGKPLGSKYVHPNDHVNRGQSSNDTFPTAMYVAVALALHQRLYPAVEGLIRTFTAKAQAFDQIVKVGRTHLMDAVPITLGQEIGSWAAQLKTTLAAVKEMEKGLYNLAIGGTAVGTGLNAHPRFGELVAKYLAEETGLPFRVAENRFAALAAHDELVNVMGAIRTLAGALMKIGNDVRWLASGPYAGIGEITIPANEPGSSIMPGKVNPTQVEALTMVVVRVYGNDHTVAFAGSQGNFQLNVYKPVMAYSTLESINLLADAVASFDAHLAQGIEPNLERIEEHLQKNPMLATALNKAIGYDKAAEIVKKALKEKKTLKQAALELGYLTEEEFDRIVVPMRLAKPHEGA</sequence>
<dbReference type="EC" id="4.2.1.2" evidence="1"/>
<dbReference type="EMBL" id="AB010884">
    <property type="protein sequence ID" value="BAA25700.1"/>
    <property type="molecule type" value="Genomic_DNA"/>
</dbReference>
<dbReference type="EMBL" id="AE017221">
    <property type="protein sequence ID" value="AAS80538.1"/>
    <property type="molecule type" value="Genomic_DNA"/>
</dbReference>
<dbReference type="PIR" id="T43727">
    <property type="entry name" value="T43727"/>
</dbReference>
<dbReference type="RefSeq" id="WP_011172644.1">
    <property type="nucleotide sequence ID" value="NC_005835.1"/>
</dbReference>
<dbReference type="SMR" id="O66271"/>
<dbReference type="GeneID" id="3169137"/>
<dbReference type="KEGG" id="tth:TT_C0190"/>
<dbReference type="eggNOG" id="COG0114">
    <property type="taxonomic scope" value="Bacteria"/>
</dbReference>
<dbReference type="HOGENOM" id="CLU_021594_4_1_0"/>
<dbReference type="OrthoDB" id="9802809at2"/>
<dbReference type="UniPathway" id="UPA00223">
    <property type="reaction ID" value="UER01007"/>
</dbReference>
<dbReference type="Proteomes" id="UP000000592">
    <property type="component" value="Chromosome"/>
</dbReference>
<dbReference type="GO" id="GO:0005737">
    <property type="term" value="C:cytoplasm"/>
    <property type="evidence" value="ECO:0007669"/>
    <property type="project" value="UniProtKB-SubCell"/>
</dbReference>
<dbReference type="GO" id="GO:0004333">
    <property type="term" value="F:fumarate hydratase activity"/>
    <property type="evidence" value="ECO:0007669"/>
    <property type="project" value="UniProtKB-UniRule"/>
</dbReference>
<dbReference type="GO" id="GO:0006106">
    <property type="term" value="P:fumarate metabolic process"/>
    <property type="evidence" value="ECO:0007669"/>
    <property type="project" value="InterPro"/>
</dbReference>
<dbReference type="GO" id="GO:0006108">
    <property type="term" value="P:malate metabolic process"/>
    <property type="evidence" value="ECO:0007669"/>
    <property type="project" value="TreeGrafter"/>
</dbReference>
<dbReference type="GO" id="GO:0006099">
    <property type="term" value="P:tricarboxylic acid cycle"/>
    <property type="evidence" value="ECO:0007669"/>
    <property type="project" value="UniProtKB-UniRule"/>
</dbReference>
<dbReference type="CDD" id="cd01362">
    <property type="entry name" value="Fumarase_classII"/>
    <property type="match status" value="1"/>
</dbReference>
<dbReference type="FunFam" id="1.10.40.30:FF:000002">
    <property type="entry name" value="Fumarate hydratase class II"/>
    <property type="match status" value="1"/>
</dbReference>
<dbReference type="FunFam" id="1.10.275.10:FF:000001">
    <property type="entry name" value="Fumarate hydratase, mitochondrial"/>
    <property type="match status" value="1"/>
</dbReference>
<dbReference type="FunFam" id="1.20.200.10:FF:000001">
    <property type="entry name" value="Fumarate hydratase, mitochondrial"/>
    <property type="match status" value="1"/>
</dbReference>
<dbReference type="Gene3D" id="1.10.40.30">
    <property type="entry name" value="Fumarase/aspartase (C-terminal domain)"/>
    <property type="match status" value="1"/>
</dbReference>
<dbReference type="Gene3D" id="1.20.200.10">
    <property type="entry name" value="Fumarase/aspartase (Central domain)"/>
    <property type="match status" value="1"/>
</dbReference>
<dbReference type="Gene3D" id="1.10.275.10">
    <property type="entry name" value="Fumarase/aspartase (N-terminal domain)"/>
    <property type="match status" value="1"/>
</dbReference>
<dbReference type="HAMAP" id="MF_00743">
    <property type="entry name" value="FumaraseC"/>
    <property type="match status" value="1"/>
</dbReference>
<dbReference type="InterPro" id="IPR005677">
    <property type="entry name" value="Fum_hydII"/>
</dbReference>
<dbReference type="InterPro" id="IPR024083">
    <property type="entry name" value="Fumarase/histidase_N"/>
</dbReference>
<dbReference type="InterPro" id="IPR018951">
    <property type="entry name" value="Fumarase_C_C"/>
</dbReference>
<dbReference type="InterPro" id="IPR020557">
    <property type="entry name" value="Fumarate_lyase_CS"/>
</dbReference>
<dbReference type="InterPro" id="IPR000362">
    <property type="entry name" value="Fumarate_lyase_fam"/>
</dbReference>
<dbReference type="InterPro" id="IPR022761">
    <property type="entry name" value="Fumarate_lyase_N"/>
</dbReference>
<dbReference type="InterPro" id="IPR008948">
    <property type="entry name" value="L-Aspartase-like"/>
</dbReference>
<dbReference type="NCBIfam" id="TIGR00979">
    <property type="entry name" value="fumC_II"/>
    <property type="match status" value="1"/>
</dbReference>
<dbReference type="NCBIfam" id="NF008909">
    <property type="entry name" value="PRK12273.1"/>
    <property type="match status" value="1"/>
</dbReference>
<dbReference type="PANTHER" id="PTHR11444">
    <property type="entry name" value="ASPARTATEAMMONIA/ARGININOSUCCINATE/ADENYLOSUCCINATE LYASE"/>
    <property type="match status" value="1"/>
</dbReference>
<dbReference type="PANTHER" id="PTHR11444:SF1">
    <property type="entry name" value="FUMARATE HYDRATASE, MITOCHONDRIAL"/>
    <property type="match status" value="1"/>
</dbReference>
<dbReference type="Pfam" id="PF10415">
    <property type="entry name" value="FumaraseC_C"/>
    <property type="match status" value="1"/>
</dbReference>
<dbReference type="Pfam" id="PF00206">
    <property type="entry name" value="Lyase_1"/>
    <property type="match status" value="1"/>
</dbReference>
<dbReference type="PRINTS" id="PR00149">
    <property type="entry name" value="FUMRATELYASE"/>
</dbReference>
<dbReference type="SUPFAM" id="SSF48557">
    <property type="entry name" value="L-aspartase-like"/>
    <property type="match status" value="1"/>
</dbReference>
<dbReference type="PROSITE" id="PS00163">
    <property type="entry name" value="FUMARATE_LYASES"/>
    <property type="match status" value="1"/>
</dbReference>
<name>FUMC_THET2</name>
<gene>
    <name evidence="1" type="primary">fumC</name>
    <name type="ordered locus">TT_C0190</name>
</gene>
<comment type="function">
    <text evidence="1">Involved in the TCA cycle. Catalyzes the stereospecific interconversion of fumarate to L-malate.</text>
</comment>
<comment type="catalytic activity">
    <reaction evidence="1">
        <text>(S)-malate = fumarate + H2O</text>
        <dbReference type="Rhea" id="RHEA:12460"/>
        <dbReference type="ChEBI" id="CHEBI:15377"/>
        <dbReference type="ChEBI" id="CHEBI:15589"/>
        <dbReference type="ChEBI" id="CHEBI:29806"/>
        <dbReference type="EC" id="4.2.1.2"/>
    </reaction>
</comment>
<comment type="pathway">
    <text evidence="1">Carbohydrate metabolism; tricarboxylic acid cycle; (S)-malate from fumarate: step 1/1.</text>
</comment>
<comment type="subunit">
    <text evidence="1">Homotetramer.</text>
</comment>
<comment type="subcellular location">
    <subcellularLocation>
        <location evidence="1">Cytoplasm</location>
    </subcellularLocation>
</comment>
<comment type="miscellaneous">
    <text evidence="1">There are 2 substrate-binding sites: the catalytic A site, and the non-catalytic B site that may play a role in the transfer of substrate or product between the active site and the solvent. Alternatively, the B site may bind allosteric effectors.</text>
</comment>
<comment type="similarity">
    <text evidence="1">Belongs to the class-II fumarase/aspartase family. Fumarase subfamily.</text>
</comment>
<keyword id="KW-0963">Cytoplasm</keyword>
<keyword id="KW-0456">Lyase</keyword>
<keyword id="KW-0816">Tricarboxylic acid cycle</keyword>
<organism>
    <name type="scientific">Thermus thermophilus (strain ATCC BAA-163 / DSM 7039 / HB27)</name>
    <dbReference type="NCBI Taxonomy" id="262724"/>
    <lineage>
        <taxon>Bacteria</taxon>
        <taxon>Thermotogati</taxon>
        <taxon>Deinococcota</taxon>
        <taxon>Deinococci</taxon>
        <taxon>Thermales</taxon>
        <taxon>Thermaceae</taxon>
        <taxon>Thermus</taxon>
    </lineage>
</organism>